<sequence>MAKAPVCARKRVRKQVSDGVAHIHASFNNTIVTITDRQGNALGWATAGGSGFRGSRKSTPFAAQVAAERCADAVKEYGIKNLEVMVKGPGPGRESTIRALNAAGFRITNITDVTPIPHNGCRPPKKRRV</sequence>
<evidence type="ECO:0000255" key="1">
    <source>
        <dbReference type="HAMAP-Rule" id="MF_01310"/>
    </source>
</evidence>
<evidence type="ECO:0000305" key="2"/>
<keyword id="KW-0687">Ribonucleoprotein</keyword>
<keyword id="KW-0689">Ribosomal protein</keyword>
<keyword id="KW-0694">RNA-binding</keyword>
<keyword id="KW-0699">rRNA-binding</keyword>
<protein>
    <recommendedName>
        <fullName evidence="1">Small ribosomal subunit protein uS11</fullName>
    </recommendedName>
    <alternativeName>
        <fullName evidence="2">30S ribosomal protein S11</fullName>
    </alternativeName>
</protein>
<gene>
    <name evidence="1" type="primary">rpsK</name>
    <name type="ordered locus">STY4381</name>
    <name type="ordered locus">t4088</name>
</gene>
<feature type="chain" id="PRO_0000123212" description="Small ribosomal subunit protein uS11">
    <location>
        <begin position="1"/>
        <end position="129"/>
    </location>
</feature>
<dbReference type="EMBL" id="AL513382">
    <property type="protein sequence ID" value="CAD09169.1"/>
    <property type="molecule type" value="Genomic_DNA"/>
</dbReference>
<dbReference type="EMBL" id="AE014613">
    <property type="protein sequence ID" value="AAO71555.1"/>
    <property type="molecule type" value="Genomic_DNA"/>
</dbReference>
<dbReference type="RefSeq" id="NP_458483.1">
    <property type="nucleotide sequence ID" value="NC_003198.1"/>
</dbReference>
<dbReference type="RefSeq" id="WP_001029757.1">
    <property type="nucleotide sequence ID" value="NZ_WSUR01000046.1"/>
</dbReference>
<dbReference type="SMR" id="Q8Z1X5"/>
<dbReference type="STRING" id="220341.gene:17588209"/>
<dbReference type="KEGG" id="stt:t4088"/>
<dbReference type="KEGG" id="sty:STY4381"/>
<dbReference type="PATRIC" id="fig|220341.7.peg.4477"/>
<dbReference type="eggNOG" id="COG0100">
    <property type="taxonomic scope" value="Bacteria"/>
</dbReference>
<dbReference type="HOGENOM" id="CLU_072439_5_0_6"/>
<dbReference type="OMA" id="KWGVAHI"/>
<dbReference type="OrthoDB" id="9806415at2"/>
<dbReference type="Proteomes" id="UP000000541">
    <property type="component" value="Chromosome"/>
</dbReference>
<dbReference type="Proteomes" id="UP000002670">
    <property type="component" value="Chromosome"/>
</dbReference>
<dbReference type="GO" id="GO:1990904">
    <property type="term" value="C:ribonucleoprotein complex"/>
    <property type="evidence" value="ECO:0007669"/>
    <property type="project" value="UniProtKB-KW"/>
</dbReference>
<dbReference type="GO" id="GO:0005840">
    <property type="term" value="C:ribosome"/>
    <property type="evidence" value="ECO:0007669"/>
    <property type="project" value="UniProtKB-KW"/>
</dbReference>
<dbReference type="GO" id="GO:0019843">
    <property type="term" value="F:rRNA binding"/>
    <property type="evidence" value="ECO:0007669"/>
    <property type="project" value="UniProtKB-UniRule"/>
</dbReference>
<dbReference type="GO" id="GO:0003735">
    <property type="term" value="F:structural constituent of ribosome"/>
    <property type="evidence" value="ECO:0007669"/>
    <property type="project" value="InterPro"/>
</dbReference>
<dbReference type="GO" id="GO:0006412">
    <property type="term" value="P:translation"/>
    <property type="evidence" value="ECO:0007669"/>
    <property type="project" value="UniProtKB-UniRule"/>
</dbReference>
<dbReference type="FunFam" id="3.30.420.80:FF:000001">
    <property type="entry name" value="30S ribosomal protein S11"/>
    <property type="match status" value="1"/>
</dbReference>
<dbReference type="Gene3D" id="3.30.420.80">
    <property type="entry name" value="Ribosomal protein S11"/>
    <property type="match status" value="1"/>
</dbReference>
<dbReference type="HAMAP" id="MF_01310">
    <property type="entry name" value="Ribosomal_uS11"/>
    <property type="match status" value="1"/>
</dbReference>
<dbReference type="InterPro" id="IPR001971">
    <property type="entry name" value="Ribosomal_uS11"/>
</dbReference>
<dbReference type="InterPro" id="IPR019981">
    <property type="entry name" value="Ribosomal_uS11_bac-type"/>
</dbReference>
<dbReference type="InterPro" id="IPR018102">
    <property type="entry name" value="Ribosomal_uS11_CS"/>
</dbReference>
<dbReference type="InterPro" id="IPR036967">
    <property type="entry name" value="Ribosomal_uS11_sf"/>
</dbReference>
<dbReference type="NCBIfam" id="NF003698">
    <property type="entry name" value="PRK05309.1"/>
    <property type="match status" value="1"/>
</dbReference>
<dbReference type="NCBIfam" id="TIGR03632">
    <property type="entry name" value="uS11_bact"/>
    <property type="match status" value="1"/>
</dbReference>
<dbReference type="PANTHER" id="PTHR11759">
    <property type="entry name" value="40S RIBOSOMAL PROTEIN S14/30S RIBOSOMAL PROTEIN S11"/>
    <property type="match status" value="1"/>
</dbReference>
<dbReference type="Pfam" id="PF00411">
    <property type="entry name" value="Ribosomal_S11"/>
    <property type="match status" value="1"/>
</dbReference>
<dbReference type="PIRSF" id="PIRSF002131">
    <property type="entry name" value="Ribosomal_S11"/>
    <property type="match status" value="1"/>
</dbReference>
<dbReference type="SUPFAM" id="SSF53137">
    <property type="entry name" value="Translational machinery components"/>
    <property type="match status" value="1"/>
</dbReference>
<dbReference type="PROSITE" id="PS00054">
    <property type="entry name" value="RIBOSOMAL_S11"/>
    <property type="match status" value="1"/>
</dbReference>
<proteinExistence type="inferred from homology"/>
<reference key="1">
    <citation type="journal article" date="2001" name="Nature">
        <title>Complete genome sequence of a multiple drug resistant Salmonella enterica serovar Typhi CT18.</title>
        <authorList>
            <person name="Parkhill J."/>
            <person name="Dougan G."/>
            <person name="James K.D."/>
            <person name="Thomson N.R."/>
            <person name="Pickard D."/>
            <person name="Wain J."/>
            <person name="Churcher C.M."/>
            <person name="Mungall K.L."/>
            <person name="Bentley S.D."/>
            <person name="Holden M.T.G."/>
            <person name="Sebaihia M."/>
            <person name="Baker S."/>
            <person name="Basham D."/>
            <person name="Brooks K."/>
            <person name="Chillingworth T."/>
            <person name="Connerton P."/>
            <person name="Cronin A."/>
            <person name="Davis P."/>
            <person name="Davies R.M."/>
            <person name="Dowd L."/>
            <person name="White N."/>
            <person name="Farrar J."/>
            <person name="Feltwell T."/>
            <person name="Hamlin N."/>
            <person name="Haque A."/>
            <person name="Hien T.T."/>
            <person name="Holroyd S."/>
            <person name="Jagels K."/>
            <person name="Krogh A."/>
            <person name="Larsen T.S."/>
            <person name="Leather S."/>
            <person name="Moule S."/>
            <person name="O'Gaora P."/>
            <person name="Parry C."/>
            <person name="Quail M.A."/>
            <person name="Rutherford K.M."/>
            <person name="Simmonds M."/>
            <person name="Skelton J."/>
            <person name="Stevens K."/>
            <person name="Whitehead S."/>
            <person name="Barrell B.G."/>
        </authorList>
    </citation>
    <scope>NUCLEOTIDE SEQUENCE [LARGE SCALE GENOMIC DNA]</scope>
    <source>
        <strain>CT18</strain>
    </source>
</reference>
<reference key="2">
    <citation type="journal article" date="2003" name="J. Bacteriol.">
        <title>Comparative genomics of Salmonella enterica serovar Typhi strains Ty2 and CT18.</title>
        <authorList>
            <person name="Deng W."/>
            <person name="Liou S.-R."/>
            <person name="Plunkett G. III"/>
            <person name="Mayhew G.F."/>
            <person name="Rose D.J."/>
            <person name="Burland V."/>
            <person name="Kodoyianni V."/>
            <person name="Schwartz D.C."/>
            <person name="Blattner F.R."/>
        </authorList>
    </citation>
    <scope>NUCLEOTIDE SEQUENCE [LARGE SCALE GENOMIC DNA]</scope>
    <source>
        <strain>ATCC 700931 / Ty2</strain>
    </source>
</reference>
<accession>Q8Z1X5</accession>
<name>RS11_SALTI</name>
<comment type="function">
    <text evidence="1">Located on the platform of the 30S subunit, it bridges several disparate RNA helices of the 16S rRNA. Forms part of the Shine-Dalgarno cleft in the 70S ribosome.</text>
</comment>
<comment type="subunit">
    <text evidence="1">Part of the 30S ribosomal subunit. Interacts with proteins S7 and S18. Binds to IF-3.</text>
</comment>
<comment type="similarity">
    <text evidence="1">Belongs to the universal ribosomal protein uS11 family.</text>
</comment>
<organism>
    <name type="scientific">Salmonella typhi</name>
    <dbReference type="NCBI Taxonomy" id="90370"/>
    <lineage>
        <taxon>Bacteria</taxon>
        <taxon>Pseudomonadati</taxon>
        <taxon>Pseudomonadota</taxon>
        <taxon>Gammaproteobacteria</taxon>
        <taxon>Enterobacterales</taxon>
        <taxon>Enterobacteriaceae</taxon>
        <taxon>Salmonella</taxon>
    </lineage>
</organism>